<reference key="1">
    <citation type="journal article" date="2002" name="Science">
        <title>50 million years of genomic stasis in endosymbiotic bacteria.</title>
        <authorList>
            <person name="Tamas I."/>
            <person name="Klasson L."/>
            <person name="Canbaeck B."/>
            <person name="Naeslund A.K."/>
            <person name="Eriksson A.-S."/>
            <person name="Wernegreen J.J."/>
            <person name="Sandstroem J.P."/>
            <person name="Moran N.A."/>
            <person name="Andersson S.G.E."/>
        </authorList>
    </citation>
    <scope>NUCLEOTIDE SEQUENCE [LARGE SCALE GENOMIC DNA]</scope>
    <source>
        <strain>Sg</strain>
    </source>
</reference>
<evidence type="ECO:0000250" key="1"/>
<evidence type="ECO:0000305" key="2"/>
<dbReference type="EMBL" id="AE013218">
    <property type="protein sequence ID" value="AAM67880.1"/>
    <property type="molecule type" value="Genomic_DNA"/>
</dbReference>
<dbReference type="RefSeq" id="WP_011053847.1">
    <property type="nucleotide sequence ID" value="NC_004061.1"/>
</dbReference>
<dbReference type="SMR" id="Q8K9K8"/>
<dbReference type="STRING" id="198804.BUsg_326"/>
<dbReference type="GeneID" id="93003797"/>
<dbReference type="KEGG" id="bas:BUsg_326"/>
<dbReference type="eggNOG" id="COG1558">
    <property type="taxonomic scope" value="Bacteria"/>
</dbReference>
<dbReference type="HOGENOM" id="CLU_123272_1_0_6"/>
<dbReference type="Proteomes" id="UP000000416">
    <property type="component" value="Chromosome"/>
</dbReference>
<dbReference type="GO" id="GO:0030694">
    <property type="term" value="C:bacterial-type flagellum basal body, rod"/>
    <property type="evidence" value="ECO:0007669"/>
    <property type="project" value="InterPro"/>
</dbReference>
<dbReference type="GO" id="GO:0071978">
    <property type="term" value="P:bacterial-type flagellum-dependent swarming motility"/>
    <property type="evidence" value="ECO:0007669"/>
    <property type="project" value="TreeGrafter"/>
</dbReference>
<dbReference type="InterPro" id="IPR001444">
    <property type="entry name" value="Flag_bb_rod_N"/>
</dbReference>
<dbReference type="InterPro" id="IPR019776">
    <property type="entry name" value="Flagellar_basal_body_rod_CS"/>
</dbReference>
<dbReference type="InterPro" id="IPR010930">
    <property type="entry name" value="Flg_bb/hook_C_dom"/>
</dbReference>
<dbReference type="InterPro" id="IPR006299">
    <property type="entry name" value="FlgC"/>
</dbReference>
<dbReference type="NCBIfam" id="TIGR01395">
    <property type="entry name" value="FlgC"/>
    <property type="match status" value="1"/>
</dbReference>
<dbReference type="PANTHER" id="PTHR30435:SF2">
    <property type="entry name" value="FLAGELLAR BASAL-BODY ROD PROTEIN FLGC"/>
    <property type="match status" value="1"/>
</dbReference>
<dbReference type="PANTHER" id="PTHR30435">
    <property type="entry name" value="FLAGELLAR PROTEIN"/>
    <property type="match status" value="1"/>
</dbReference>
<dbReference type="Pfam" id="PF00460">
    <property type="entry name" value="Flg_bb_rod"/>
    <property type="match status" value="1"/>
</dbReference>
<dbReference type="Pfam" id="PF06429">
    <property type="entry name" value="Flg_bbr_C"/>
    <property type="match status" value="1"/>
</dbReference>
<dbReference type="PROSITE" id="PS00588">
    <property type="entry name" value="FLAGELLA_BB_ROD"/>
    <property type="match status" value="1"/>
</dbReference>
<organism>
    <name type="scientific">Buchnera aphidicola subsp. Schizaphis graminum (strain Sg)</name>
    <dbReference type="NCBI Taxonomy" id="198804"/>
    <lineage>
        <taxon>Bacteria</taxon>
        <taxon>Pseudomonadati</taxon>
        <taxon>Pseudomonadota</taxon>
        <taxon>Gammaproteobacteria</taxon>
        <taxon>Enterobacterales</taxon>
        <taxon>Erwiniaceae</taxon>
        <taxon>Buchnera</taxon>
    </lineage>
</organism>
<feature type="chain" id="PRO_0000180801" description="Flagellar basal-body rod protein FlgC">
    <location>
        <begin position="1"/>
        <end position="136"/>
    </location>
</feature>
<proteinExistence type="inferred from homology"/>
<sequence length="136" mass="14789">MSLLNILNIAGSAMSAQSEKINVIASNLANAESIVCKDGKFYPYIAKKVIFKLDPLKNSLIGGVKVFSIINDLNPMKLIYDPSNPLSNKNGYVLQTNVNPVSETINHISASRSYQANVEVLKTAKSMIMKTLSIGE</sequence>
<keyword id="KW-0975">Bacterial flagellum</keyword>
<name>FLGC_BUCAP</name>
<protein>
    <recommendedName>
        <fullName>Flagellar basal-body rod protein FlgC</fullName>
    </recommendedName>
</protein>
<gene>
    <name type="primary">flgC</name>
    <name type="ordered locus">BUsg_326</name>
</gene>
<comment type="subunit">
    <text evidence="1">The basal body constitutes a major portion of the flagellar organelle and consists of four rings (L,P,S, and M) mounted on a central rod. The rod consists of about 26 subunits of FlgG in the distal portion, and FlgB, FlgC and FlgF are thought to build up the proximal portion of the rod with about 6 subunits each (By similarity).</text>
</comment>
<comment type="subcellular location">
    <subcellularLocation>
        <location evidence="1">Bacterial flagellum basal body</location>
    </subcellularLocation>
</comment>
<comment type="similarity">
    <text evidence="2">Belongs to the flagella basal body rod proteins family.</text>
</comment>
<accession>Q8K9K8</accession>